<organism>
    <name type="scientific">Burkholderia pseudomallei (strain K96243)</name>
    <dbReference type="NCBI Taxonomy" id="272560"/>
    <lineage>
        <taxon>Bacteria</taxon>
        <taxon>Pseudomonadati</taxon>
        <taxon>Pseudomonadota</taxon>
        <taxon>Betaproteobacteria</taxon>
        <taxon>Burkholderiales</taxon>
        <taxon>Burkholderiaceae</taxon>
        <taxon>Burkholderia</taxon>
        <taxon>pseudomallei group</taxon>
    </lineage>
</organism>
<dbReference type="EC" id="2.1.1.192" evidence="1"/>
<dbReference type="EMBL" id="BX571965">
    <property type="protein sequence ID" value="CAH35512.1"/>
    <property type="molecule type" value="Genomic_DNA"/>
</dbReference>
<dbReference type="RefSeq" id="WP_004192451.1">
    <property type="nucleotide sequence ID" value="NZ_CP009538.1"/>
</dbReference>
<dbReference type="RefSeq" id="YP_108131.1">
    <property type="nucleotide sequence ID" value="NC_006350.1"/>
</dbReference>
<dbReference type="SMR" id="Q63UT5"/>
<dbReference type="STRING" id="272560.BPSL1511"/>
<dbReference type="GeneID" id="93060478"/>
<dbReference type="KEGG" id="bps:BPSL1511"/>
<dbReference type="PATRIC" id="fig|272560.51.peg.3548"/>
<dbReference type="eggNOG" id="COG0820">
    <property type="taxonomic scope" value="Bacteria"/>
</dbReference>
<dbReference type="Proteomes" id="UP000000605">
    <property type="component" value="Chromosome 1"/>
</dbReference>
<dbReference type="GO" id="GO:0005737">
    <property type="term" value="C:cytoplasm"/>
    <property type="evidence" value="ECO:0007669"/>
    <property type="project" value="UniProtKB-SubCell"/>
</dbReference>
<dbReference type="GO" id="GO:0051539">
    <property type="term" value="F:4 iron, 4 sulfur cluster binding"/>
    <property type="evidence" value="ECO:0007669"/>
    <property type="project" value="UniProtKB-UniRule"/>
</dbReference>
<dbReference type="GO" id="GO:0046872">
    <property type="term" value="F:metal ion binding"/>
    <property type="evidence" value="ECO:0007669"/>
    <property type="project" value="UniProtKB-KW"/>
</dbReference>
<dbReference type="GO" id="GO:0070040">
    <property type="term" value="F:rRNA (adenine(2503)-C2-)-methyltransferase activity"/>
    <property type="evidence" value="ECO:0007669"/>
    <property type="project" value="UniProtKB-UniRule"/>
</dbReference>
<dbReference type="GO" id="GO:0019843">
    <property type="term" value="F:rRNA binding"/>
    <property type="evidence" value="ECO:0007669"/>
    <property type="project" value="UniProtKB-UniRule"/>
</dbReference>
<dbReference type="GO" id="GO:0002935">
    <property type="term" value="F:tRNA (adenine(37)-C2)-methyltransferase activity"/>
    <property type="evidence" value="ECO:0007669"/>
    <property type="project" value="UniProtKB-UniRule"/>
</dbReference>
<dbReference type="GO" id="GO:0000049">
    <property type="term" value="F:tRNA binding"/>
    <property type="evidence" value="ECO:0007669"/>
    <property type="project" value="UniProtKB-UniRule"/>
</dbReference>
<dbReference type="GO" id="GO:0070475">
    <property type="term" value="P:rRNA base methylation"/>
    <property type="evidence" value="ECO:0007669"/>
    <property type="project" value="UniProtKB-UniRule"/>
</dbReference>
<dbReference type="GO" id="GO:0030488">
    <property type="term" value="P:tRNA methylation"/>
    <property type="evidence" value="ECO:0007669"/>
    <property type="project" value="UniProtKB-UniRule"/>
</dbReference>
<dbReference type="CDD" id="cd01335">
    <property type="entry name" value="Radical_SAM"/>
    <property type="match status" value="1"/>
</dbReference>
<dbReference type="FunFam" id="1.10.150.530:FF:000003">
    <property type="entry name" value="Dual-specificity RNA methyltransferase RlmN"/>
    <property type="match status" value="1"/>
</dbReference>
<dbReference type="FunFam" id="3.20.20.70:FF:000008">
    <property type="entry name" value="Dual-specificity RNA methyltransferase RlmN"/>
    <property type="match status" value="1"/>
</dbReference>
<dbReference type="Gene3D" id="1.10.150.530">
    <property type="match status" value="1"/>
</dbReference>
<dbReference type="Gene3D" id="3.20.20.70">
    <property type="entry name" value="Aldolase class I"/>
    <property type="match status" value="1"/>
</dbReference>
<dbReference type="HAMAP" id="MF_01849">
    <property type="entry name" value="RNA_methyltr_RlmN"/>
    <property type="match status" value="1"/>
</dbReference>
<dbReference type="InterPro" id="IPR013785">
    <property type="entry name" value="Aldolase_TIM"/>
</dbReference>
<dbReference type="InterPro" id="IPR040072">
    <property type="entry name" value="Methyltransferase_A"/>
</dbReference>
<dbReference type="InterPro" id="IPR048641">
    <property type="entry name" value="RlmN_N"/>
</dbReference>
<dbReference type="InterPro" id="IPR027492">
    <property type="entry name" value="RNA_MTrfase_RlmN"/>
</dbReference>
<dbReference type="InterPro" id="IPR004383">
    <property type="entry name" value="rRNA_lsu_MTrfase_RlmN/Cfr"/>
</dbReference>
<dbReference type="InterPro" id="IPR007197">
    <property type="entry name" value="rSAM"/>
</dbReference>
<dbReference type="NCBIfam" id="TIGR00048">
    <property type="entry name" value="rRNA_mod_RlmN"/>
    <property type="match status" value="1"/>
</dbReference>
<dbReference type="PANTHER" id="PTHR30544">
    <property type="entry name" value="23S RRNA METHYLTRANSFERASE"/>
    <property type="match status" value="1"/>
</dbReference>
<dbReference type="PANTHER" id="PTHR30544:SF5">
    <property type="entry name" value="RADICAL SAM CORE DOMAIN-CONTAINING PROTEIN"/>
    <property type="match status" value="1"/>
</dbReference>
<dbReference type="Pfam" id="PF04055">
    <property type="entry name" value="Radical_SAM"/>
    <property type="match status" value="1"/>
</dbReference>
<dbReference type="Pfam" id="PF21016">
    <property type="entry name" value="RlmN_N"/>
    <property type="match status" value="1"/>
</dbReference>
<dbReference type="PIRSF" id="PIRSF006004">
    <property type="entry name" value="CHP00048"/>
    <property type="match status" value="1"/>
</dbReference>
<dbReference type="SFLD" id="SFLDF00275">
    <property type="entry name" value="adenosine_C2_methyltransferase"/>
    <property type="match status" value="1"/>
</dbReference>
<dbReference type="SFLD" id="SFLDG01062">
    <property type="entry name" value="methyltransferase_(Class_A)"/>
    <property type="match status" value="1"/>
</dbReference>
<dbReference type="SUPFAM" id="SSF102114">
    <property type="entry name" value="Radical SAM enzymes"/>
    <property type="match status" value="1"/>
</dbReference>
<dbReference type="PROSITE" id="PS51918">
    <property type="entry name" value="RADICAL_SAM"/>
    <property type="match status" value="1"/>
</dbReference>
<proteinExistence type="inferred from homology"/>
<gene>
    <name evidence="1" type="primary">rlmN</name>
    <name type="ordered locus">BPSL1511</name>
</gene>
<protein>
    <recommendedName>
        <fullName evidence="1">Dual-specificity RNA methyltransferase RlmN</fullName>
        <ecNumber evidence="1">2.1.1.192</ecNumber>
    </recommendedName>
    <alternativeName>
        <fullName evidence="1">23S rRNA (adenine(2503)-C(2))-methyltransferase</fullName>
    </alternativeName>
    <alternativeName>
        <fullName evidence="1">23S rRNA m2A2503 methyltransferase</fullName>
    </alternativeName>
    <alternativeName>
        <fullName evidence="1">Ribosomal RNA large subunit methyltransferase N</fullName>
    </alternativeName>
    <alternativeName>
        <fullName evidence="1">tRNA (adenine(37)-C(2))-methyltransferase</fullName>
    </alternativeName>
    <alternativeName>
        <fullName evidence="1">tRNA m2A37 methyltransferase</fullName>
    </alternativeName>
</protein>
<reference key="1">
    <citation type="journal article" date="2004" name="Proc. Natl. Acad. Sci. U.S.A.">
        <title>Genomic plasticity of the causative agent of melioidosis, Burkholderia pseudomallei.</title>
        <authorList>
            <person name="Holden M.T.G."/>
            <person name="Titball R.W."/>
            <person name="Peacock S.J."/>
            <person name="Cerdeno-Tarraga A.-M."/>
            <person name="Atkins T."/>
            <person name="Crossman L.C."/>
            <person name="Pitt T."/>
            <person name="Churcher C."/>
            <person name="Mungall K.L."/>
            <person name="Bentley S.D."/>
            <person name="Sebaihia M."/>
            <person name="Thomson N.R."/>
            <person name="Bason N."/>
            <person name="Beacham I.R."/>
            <person name="Brooks K."/>
            <person name="Brown K.A."/>
            <person name="Brown N.F."/>
            <person name="Challis G.L."/>
            <person name="Cherevach I."/>
            <person name="Chillingworth T."/>
            <person name="Cronin A."/>
            <person name="Crossett B."/>
            <person name="Davis P."/>
            <person name="DeShazer D."/>
            <person name="Feltwell T."/>
            <person name="Fraser A."/>
            <person name="Hance Z."/>
            <person name="Hauser H."/>
            <person name="Holroyd S."/>
            <person name="Jagels K."/>
            <person name="Keith K.E."/>
            <person name="Maddison M."/>
            <person name="Moule S."/>
            <person name="Price C."/>
            <person name="Quail M.A."/>
            <person name="Rabbinowitsch E."/>
            <person name="Rutherford K."/>
            <person name="Sanders M."/>
            <person name="Simmonds M."/>
            <person name="Songsivilai S."/>
            <person name="Stevens K."/>
            <person name="Tumapa S."/>
            <person name="Vesaratchavest M."/>
            <person name="Whitehead S."/>
            <person name="Yeats C."/>
            <person name="Barrell B.G."/>
            <person name="Oyston P.C.F."/>
            <person name="Parkhill J."/>
        </authorList>
    </citation>
    <scope>NUCLEOTIDE SEQUENCE [LARGE SCALE GENOMIC DNA]</scope>
    <source>
        <strain>K96243</strain>
    </source>
</reference>
<sequence length="378" mass="41131">MAGETIVNLLDLDAEGLVAYCGSLGEKAFRAKQLQRWIHQYNAADFDGMTDLAKSLREKLKGRAVIGTPDILSDHVSADGTRKWLINVGNGNAVETVFIPEETRGTLCVSSQAGCAVNCRFCSTGKQGFSRNLSTGEIVGQLRMAEFALRASLGRAPGPNGKAERVITNVVMMGMGEPLLNYSAVVPAMRLMLDDNAYGLSRRRVTLSTSGVVPMMDRLGAELPVALAVSLHAPNDALRDELVPLNKKHPLRELMAACQRYLKVAPRDFITFEYCMLDGVNDTEAHARELLAVTRDVPCKFNLIPFNPFPESGLVRSKTEQIKRFAQVLIDAGVVTTIRKTRGDDIDAACGQLAGAVKDRTRLAERTGASKIIEVRAV</sequence>
<feature type="chain" id="PRO_0000350081" description="Dual-specificity RNA methyltransferase RlmN">
    <location>
        <begin position="1"/>
        <end position="378"/>
    </location>
</feature>
<feature type="domain" description="Radical SAM core" evidence="2">
    <location>
        <begin position="101"/>
        <end position="345"/>
    </location>
</feature>
<feature type="active site" description="Proton acceptor" evidence="1">
    <location>
        <position position="95"/>
    </location>
</feature>
<feature type="active site" description="S-methylcysteine intermediate" evidence="1">
    <location>
        <position position="350"/>
    </location>
</feature>
<feature type="binding site" evidence="1">
    <location>
        <position position="115"/>
    </location>
    <ligand>
        <name>[4Fe-4S] cluster</name>
        <dbReference type="ChEBI" id="CHEBI:49883"/>
        <note>4Fe-4S-S-AdoMet</note>
    </ligand>
</feature>
<feature type="binding site" evidence="1">
    <location>
        <position position="119"/>
    </location>
    <ligand>
        <name>[4Fe-4S] cluster</name>
        <dbReference type="ChEBI" id="CHEBI:49883"/>
        <note>4Fe-4S-S-AdoMet</note>
    </ligand>
</feature>
<feature type="binding site" evidence="1">
    <location>
        <position position="122"/>
    </location>
    <ligand>
        <name>[4Fe-4S] cluster</name>
        <dbReference type="ChEBI" id="CHEBI:49883"/>
        <note>4Fe-4S-S-AdoMet</note>
    </ligand>
</feature>
<feature type="binding site" evidence="1">
    <location>
        <begin position="176"/>
        <end position="177"/>
    </location>
    <ligand>
        <name>S-adenosyl-L-methionine</name>
        <dbReference type="ChEBI" id="CHEBI:59789"/>
    </ligand>
</feature>
<feature type="binding site" evidence="1">
    <location>
        <position position="208"/>
    </location>
    <ligand>
        <name>S-adenosyl-L-methionine</name>
        <dbReference type="ChEBI" id="CHEBI:59789"/>
    </ligand>
</feature>
<feature type="binding site" evidence="1">
    <location>
        <begin position="230"/>
        <end position="232"/>
    </location>
    <ligand>
        <name>S-adenosyl-L-methionine</name>
        <dbReference type="ChEBI" id="CHEBI:59789"/>
    </ligand>
</feature>
<feature type="binding site" evidence="1">
    <location>
        <position position="307"/>
    </location>
    <ligand>
        <name>S-adenosyl-L-methionine</name>
        <dbReference type="ChEBI" id="CHEBI:59789"/>
    </ligand>
</feature>
<feature type="disulfide bond" description="(transient)" evidence="1">
    <location>
        <begin position="108"/>
        <end position="350"/>
    </location>
</feature>
<comment type="function">
    <text evidence="1">Specifically methylates position 2 of adenine 2503 in 23S rRNA and position 2 of adenine 37 in tRNAs. m2A2503 modification seems to play a crucial role in the proofreading step occurring at the peptidyl transferase center and thus would serve to optimize ribosomal fidelity.</text>
</comment>
<comment type="catalytic activity">
    <reaction evidence="1">
        <text>adenosine(2503) in 23S rRNA + 2 reduced [2Fe-2S]-[ferredoxin] + 2 S-adenosyl-L-methionine = 2-methyladenosine(2503) in 23S rRNA + 5'-deoxyadenosine + L-methionine + 2 oxidized [2Fe-2S]-[ferredoxin] + S-adenosyl-L-homocysteine</text>
        <dbReference type="Rhea" id="RHEA:42916"/>
        <dbReference type="Rhea" id="RHEA-COMP:10000"/>
        <dbReference type="Rhea" id="RHEA-COMP:10001"/>
        <dbReference type="Rhea" id="RHEA-COMP:10152"/>
        <dbReference type="Rhea" id="RHEA-COMP:10282"/>
        <dbReference type="ChEBI" id="CHEBI:17319"/>
        <dbReference type="ChEBI" id="CHEBI:33737"/>
        <dbReference type="ChEBI" id="CHEBI:33738"/>
        <dbReference type="ChEBI" id="CHEBI:57844"/>
        <dbReference type="ChEBI" id="CHEBI:57856"/>
        <dbReference type="ChEBI" id="CHEBI:59789"/>
        <dbReference type="ChEBI" id="CHEBI:74411"/>
        <dbReference type="ChEBI" id="CHEBI:74497"/>
        <dbReference type="EC" id="2.1.1.192"/>
    </reaction>
</comment>
<comment type="catalytic activity">
    <reaction evidence="1">
        <text>adenosine(37) in tRNA + 2 reduced [2Fe-2S]-[ferredoxin] + 2 S-adenosyl-L-methionine = 2-methyladenosine(37) in tRNA + 5'-deoxyadenosine + L-methionine + 2 oxidized [2Fe-2S]-[ferredoxin] + S-adenosyl-L-homocysteine</text>
        <dbReference type="Rhea" id="RHEA:43332"/>
        <dbReference type="Rhea" id="RHEA-COMP:10000"/>
        <dbReference type="Rhea" id="RHEA-COMP:10001"/>
        <dbReference type="Rhea" id="RHEA-COMP:10162"/>
        <dbReference type="Rhea" id="RHEA-COMP:10485"/>
        <dbReference type="ChEBI" id="CHEBI:17319"/>
        <dbReference type="ChEBI" id="CHEBI:33737"/>
        <dbReference type="ChEBI" id="CHEBI:33738"/>
        <dbReference type="ChEBI" id="CHEBI:57844"/>
        <dbReference type="ChEBI" id="CHEBI:57856"/>
        <dbReference type="ChEBI" id="CHEBI:59789"/>
        <dbReference type="ChEBI" id="CHEBI:74411"/>
        <dbReference type="ChEBI" id="CHEBI:74497"/>
        <dbReference type="EC" id="2.1.1.192"/>
    </reaction>
</comment>
<comment type="cofactor">
    <cofactor evidence="1">
        <name>[4Fe-4S] cluster</name>
        <dbReference type="ChEBI" id="CHEBI:49883"/>
    </cofactor>
    <text evidence="1">Binds 1 [4Fe-4S] cluster. The cluster is coordinated with 3 cysteines and an exchangeable S-adenosyl-L-methionine.</text>
</comment>
<comment type="subcellular location">
    <subcellularLocation>
        <location evidence="1">Cytoplasm</location>
    </subcellularLocation>
</comment>
<comment type="miscellaneous">
    <text evidence="1">Reaction proceeds by a ping-pong mechanism involving intermediate methylation of a conserved cysteine residue.</text>
</comment>
<comment type="similarity">
    <text evidence="1">Belongs to the radical SAM superfamily. RlmN family.</text>
</comment>
<evidence type="ECO:0000255" key="1">
    <source>
        <dbReference type="HAMAP-Rule" id="MF_01849"/>
    </source>
</evidence>
<evidence type="ECO:0000255" key="2">
    <source>
        <dbReference type="PROSITE-ProRule" id="PRU01266"/>
    </source>
</evidence>
<accession>Q63UT5</accession>
<keyword id="KW-0004">4Fe-4S</keyword>
<keyword id="KW-0963">Cytoplasm</keyword>
<keyword id="KW-1015">Disulfide bond</keyword>
<keyword id="KW-0408">Iron</keyword>
<keyword id="KW-0411">Iron-sulfur</keyword>
<keyword id="KW-0479">Metal-binding</keyword>
<keyword id="KW-0489">Methyltransferase</keyword>
<keyword id="KW-1185">Reference proteome</keyword>
<keyword id="KW-0698">rRNA processing</keyword>
<keyword id="KW-0949">S-adenosyl-L-methionine</keyword>
<keyword id="KW-0808">Transferase</keyword>
<keyword id="KW-0819">tRNA processing</keyword>
<name>RLMN_BURPS</name>